<gene>
    <name type="primary">PA</name>
</gene>
<feature type="chain" id="PRO_0000419373" description="Protein PA-X">
    <location>
        <begin position="1"/>
        <end position="252"/>
    </location>
</feature>
<feature type="active site" evidence="2">
    <location>
        <position position="80"/>
    </location>
</feature>
<feature type="active site" evidence="2">
    <location>
        <position position="108"/>
    </location>
</feature>
<feature type="site" description="Important for efficient shutoff activity and nuclear localization" evidence="4">
    <location>
        <position position="195"/>
    </location>
</feature>
<feature type="site" description="Important for efficient shutoff activity and nuclear localization" evidence="4">
    <location>
        <position position="198"/>
    </location>
</feature>
<feature type="site" description="Important for efficient shutoff activity and nuclear localization" evidence="4">
    <location>
        <position position="199"/>
    </location>
</feature>
<feature type="site" description="Important for efficient shutoff activity" evidence="3">
    <location>
        <position position="202"/>
    </location>
</feature>
<feature type="site" description="Important for efficient shutoff activity" evidence="3">
    <location>
        <position position="203"/>
    </location>
</feature>
<feature type="site" description="Important for efficient shutoff activity" evidence="3">
    <location>
        <position position="206"/>
    </location>
</feature>
<accession>P0CK90</accession>
<protein>
    <recommendedName>
        <fullName>Protein PA-X</fullName>
    </recommendedName>
</protein>
<reference key="1">
    <citation type="journal article" date="2006" name="Proc. Natl. Acad. Sci. U.S.A.">
        <title>Emergence and predominance of an H5N1 influenza variant in China.</title>
        <authorList>
            <person name="Smith G.J."/>
            <person name="Fan X.H."/>
            <person name="Wang J."/>
            <person name="Li K.S."/>
            <person name="Qin K."/>
            <person name="Zhang J.X."/>
            <person name="Vijaykrishna D."/>
            <person name="Cheung C.L."/>
            <person name="Huang K."/>
            <person name="Rayner J.M."/>
            <person name="Peiris J.S."/>
            <person name="Chen H."/>
            <person name="Webster R.G."/>
            <person name="Guan Y."/>
        </authorList>
    </citation>
    <scope>NUCLEOTIDE SEQUENCE [GENOMIC RNA]</scope>
</reference>
<comment type="function">
    <text evidence="1 4">Plays a major role in the shutoff of the host protein expression by cleaving mRNAs probably via an endonuclease activity. This host shutoff allows the virus to escape from the host antiviral response (By similarity). Hijacks host RNA splicing machinery to selectively target host RNAs containing introns for destruction. This may explain the preferential degradation of RNAs that have undergone co- or post-transcriptional processing (By similarity).</text>
</comment>
<comment type="subcellular location">
    <subcellularLocation>
        <location evidence="4">Host cytoplasm</location>
    </subcellularLocation>
    <subcellularLocation>
        <location evidence="4">Host nucleus</location>
    </subcellularLocation>
</comment>
<comment type="alternative products">
    <event type="ribosomal frameshifting"/>
    <isoform>
        <id>P0CK90-1</id>
        <name>PA-X</name>
        <sequence type="displayed"/>
    </isoform>
    <isoform>
        <id>Q2F4H0-1</id>
        <name>PA</name>
        <sequence type="external"/>
    </isoform>
</comment>
<comment type="domain">
    <text evidence="1 4">The probable endonuclease active site in the N-terminus and the basic amino acid cluster in the C-terminus are important for the shutoff activity. The C-terminus acts as a nuclear localization signal (By similarity). The C-terminus is recruited to host protein complexes involved in nuclear Pol II RNA processing (By similarity).</text>
</comment>
<comment type="similarity">
    <text evidence="5">Belongs to the influenza viruses PA-X family.</text>
</comment>
<organismHost>
    <name type="scientific">Aves</name>
    <dbReference type="NCBI Taxonomy" id="8782"/>
</organismHost>
<organismHost>
    <name type="scientific">Felis catus</name>
    <name type="common">Cat</name>
    <name type="synonym">Felis silvestris catus</name>
    <dbReference type="NCBI Taxonomy" id="9685"/>
</organismHost>
<organismHost>
    <name type="scientific">Homo sapiens</name>
    <name type="common">Human</name>
    <dbReference type="NCBI Taxonomy" id="9606"/>
</organismHost>
<organismHost>
    <name type="scientific">Panthera pardus</name>
    <name type="common">Leopard</name>
    <name type="synonym">Felis pardus</name>
    <dbReference type="NCBI Taxonomy" id="9691"/>
</organismHost>
<organismHost>
    <name type="scientific">Panthera tigris</name>
    <name type="common">Tiger</name>
    <dbReference type="NCBI Taxonomy" id="9694"/>
</organismHost>
<organismHost>
    <name type="scientific">Sus scrofa</name>
    <name type="common">Pig</name>
    <dbReference type="NCBI Taxonomy" id="9823"/>
</organismHost>
<sequence>MEDFVRQCFNPMIVELAEKAMKEYGEDPKIETNKFAAICTHLEVCFMYSDFHFIDERSESIIVESGDPNALLKHRFEIIEGRDRTMAWTVVNSICNTTGVEKPKFLPDLYDYKEDRFIEIGVTRREVHTYYLEKANKIKSEKTHIHIFSFTGEEMATKADYTLDEESRARIKTRLFTIRQEMASRGLWDSFVNPREAKRQLKKNLKSLEPCADLPTKVSHRTSPALKTLEPMWMDSNRTAALRASFLKCQKR</sequence>
<keyword id="KW-1132">Decay of host mRNAs by virus</keyword>
<keyword id="KW-1262">Eukaryotic host gene expression shutoff by virus</keyword>
<keyword id="KW-1035">Host cytoplasm</keyword>
<keyword id="KW-1190">Host gene expression shutoff by virus</keyword>
<keyword id="KW-1192">Host mRNA suppression by virus</keyword>
<keyword id="KW-1048">Host nucleus</keyword>
<keyword id="KW-0945">Host-virus interaction</keyword>
<keyword id="KW-0688">Ribosomal frameshifting</keyword>
<organism>
    <name type="scientific">Influenza A virus (strain A/Goose/Guangxi/345/2005 H5N1 genotype G)</name>
    <dbReference type="NCBI Taxonomy" id="365089"/>
    <lineage>
        <taxon>Viruses</taxon>
        <taxon>Riboviria</taxon>
        <taxon>Orthornavirae</taxon>
        <taxon>Negarnaviricota</taxon>
        <taxon>Polyploviricotina</taxon>
        <taxon>Insthoviricetes</taxon>
        <taxon>Articulavirales</taxon>
        <taxon>Orthomyxoviridae</taxon>
        <taxon>Alphainfluenzavirus</taxon>
        <taxon>Alphainfluenzavirus influenzae</taxon>
        <taxon>Influenza A virus</taxon>
    </lineage>
</organism>
<dbReference type="EMBL" id="DQ321225">
    <property type="status" value="NOT_ANNOTATED_CDS"/>
    <property type="molecule type" value="Genomic_RNA"/>
</dbReference>
<dbReference type="SMR" id="P0CK90"/>
<dbReference type="GO" id="GO:0003723">
    <property type="term" value="F:RNA binding"/>
    <property type="evidence" value="ECO:0007669"/>
    <property type="project" value="InterPro"/>
</dbReference>
<dbReference type="GO" id="GO:0039694">
    <property type="term" value="P:viral RNA genome replication"/>
    <property type="evidence" value="ECO:0007669"/>
    <property type="project" value="InterPro"/>
</dbReference>
<dbReference type="GO" id="GO:0075523">
    <property type="term" value="P:viral translational frameshifting"/>
    <property type="evidence" value="ECO:0007669"/>
    <property type="project" value="UniProtKB-KW"/>
</dbReference>
<dbReference type="FunFam" id="3.40.91.90:FF:000001">
    <property type="entry name" value="Polymerase acidic protein"/>
    <property type="match status" value="1"/>
</dbReference>
<dbReference type="Gene3D" id="3.40.91.90">
    <property type="entry name" value="Influenza RNA-dependent RNA polymerase subunit PA, endonuclease domain"/>
    <property type="match status" value="1"/>
</dbReference>
<dbReference type="InterPro" id="IPR001009">
    <property type="entry name" value="PA/PA-X"/>
</dbReference>
<dbReference type="InterPro" id="IPR038372">
    <property type="entry name" value="PA/PA-X_sf"/>
</dbReference>
<dbReference type="Pfam" id="PF00603">
    <property type="entry name" value="Flu_PA"/>
    <property type="match status" value="1"/>
</dbReference>
<proteinExistence type="inferred from homology"/>
<evidence type="ECO:0000250" key="1">
    <source>
        <dbReference type="UniProtKB" id="P0CK64"/>
    </source>
</evidence>
<evidence type="ECO:0000250" key="2">
    <source>
        <dbReference type="UniProtKB" id="P0CK68"/>
    </source>
</evidence>
<evidence type="ECO:0000250" key="3">
    <source>
        <dbReference type="UniProtKB" id="P0DJW8"/>
    </source>
</evidence>
<evidence type="ECO:0000250" key="4">
    <source>
        <dbReference type="UniProtKB" id="P0DXO5"/>
    </source>
</evidence>
<evidence type="ECO:0000305" key="5"/>
<name>PAX_I05A1</name>